<organism>
    <name type="scientific">Haemophilus influenzae (strain 86-028NP)</name>
    <dbReference type="NCBI Taxonomy" id="281310"/>
    <lineage>
        <taxon>Bacteria</taxon>
        <taxon>Pseudomonadati</taxon>
        <taxon>Pseudomonadota</taxon>
        <taxon>Gammaproteobacteria</taxon>
        <taxon>Pasteurellales</taxon>
        <taxon>Pasteurellaceae</taxon>
        <taxon>Haemophilus</taxon>
    </lineage>
</organism>
<keyword id="KW-1003">Cell membrane</keyword>
<keyword id="KW-0472">Membrane</keyword>
<keyword id="KW-0812">Transmembrane</keyword>
<keyword id="KW-1133">Transmembrane helix</keyword>
<evidence type="ECO:0000255" key="1">
    <source>
        <dbReference type="HAMAP-Rule" id="MF_01874"/>
    </source>
</evidence>
<feature type="chain" id="PRO_0000388881" description="UPF0756 membrane protein NTHI1233">
    <location>
        <begin position="1"/>
        <end position="150"/>
    </location>
</feature>
<feature type="transmembrane region" description="Helical" evidence="1">
    <location>
        <begin position="1"/>
        <end position="21"/>
    </location>
</feature>
<feature type="transmembrane region" description="Helical" evidence="1">
    <location>
        <begin position="52"/>
        <end position="72"/>
    </location>
</feature>
<feature type="transmembrane region" description="Helical" evidence="1">
    <location>
        <begin position="81"/>
        <end position="101"/>
    </location>
</feature>
<feature type="transmembrane region" description="Helical" evidence="1">
    <location>
        <begin position="123"/>
        <end position="143"/>
    </location>
</feature>
<reference key="1">
    <citation type="journal article" date="2005" name="J. Bacteriol.">
        <title>Genomic sequence of an otitis media isolate of nontypeable Haemophilus influenzae: comparative study with H. influenzae serotype d, strain KW20.</title>
        <authorList>
            <person name="Harrison A."/>
            <person name="Dyer D.W."/>
            <person name="Gillaspy A."/>
            <person name="Ray W.C."/>
            <person name="Mungur R."/>
            <person name="Carson M.B."/>
            <person name="Zhong H."/>
            <person name="Gipson J."/>
            <person name="Gipson M."/>
            <person name="Johnson L.S."/>
            <person name="Lewis L."/>
            <person name="Bakaletz L.O."/>
            <person name="Munson R.S. Jr."/>
        </authorList>
    </citation>
    <scope>NUCLEOTIDE SEQUENCE [LARGE SCALE GENOMIC DNA]</scope>
    <source>
        <strain>86-028NP</strain>
    </source>
</reference>
<proteinExistence type="inferred from homology"/>
<sequence length="150" mass="15433">MTLQLNTIALLLVILLILGVLSNNSAITISAAVLLIMQQTFLSSHIPLLEKYGVKIGIIILTIGVLSPLVSGKIQLPDLSGFLSWKMALSIAVGVLVAWLAGKGVPLMGEQPILVTGLLIGTIIGVAFLGGIPVGPLIAAGILALLLGKI</sequence>
<protein>
    <recommendedName>
        <fullName evidence="1">UPF0756 membrane protein NTHI1233</fullName>
    </recommendedName>
</protein>
<dbReference type="EMBL" id="CP000057">
    <property type="protein sequence ID" value="AAX88082.1"/>
    <property type="molecule type" value="Genomic_DNA"/>
</dbReference>
<dbReference type="RefSeq" id="WP_005665908.1">
    <property type="nucleotide sequence ID" value="NC_007146.2"/>
</dbReference>
<dbReference type="KEGG" id="hit:NTHI1233"/>
<dbReference type="HOGENOM" id="CLU_125889_0_0_6"/>
<dbReference type="Proteomes" id="UP000002525">
    <property type="component" value="Chromosome"/>
</dbReference>
<dbReference type="GO" id="GO:0005886">
    <property type="term" value="C:plasma membrane"/>
    <property type="evidence" value="ECO:0007669"/>
    <property type="project" value="UniProtKB-SubCell"/>
</dbReference>
<dbReference type="HAMAP" id="MF_01874">
    <property type="entry name" value="UPF0756"/>
    <property type="match status" value="1"/>
</dbReference>
<dbReference type="InterPro" id="IPR007382">
    <property type="entry name" value="UPF0756_TM"/>
</dbReference>
<dbReference type="PANTHER" id="PTHR38452">
    <property type="entry name" value="UPF0756 MEMBRANE PROTEIN YEAL"/>
    <property type="match status" value="1"/>
</dbReference>
<dbReference type="PANTHER" id="PTHR38452:SF1">
    <property type="entry name" value="UPF0756 MEMBRANE PROTEIN YEAL"/>
    <property type="match status" value="1"/>
</dbReference>
<dbReference type="Pfam" id="PF04284">
    <property type="entry name" value="DUF441"/>
    <property type="match status" value="1"/>
</dbReference>
<comment type="subcellular location">
    <subcellularLocation>
        <location evidence="1">Cell membrane</location>
        <topology evidence="1">Multi-pass membrane protein</topology>
    </subcellularLocation>
</comment>
<comment type="similarity">
    <text evidence="1">Belongs to the UPF0756 family.</text>
</comment>
<accession>Q4QLL5</accession>
<name>Y1233_HAEI8</name>
<gene>
    <name type="ordered locus">NTHI1233</name>
</gene>